<sequence>MSKRTLASLTAADLEGKRVLVRVDFNVPLDGNGKITDDTRIRAALPTIRYLSESGAKVILVSHFGRPKGKPVESMRLTPVAERLSELLGRPVVKTTDAVGAGAEAQVAATSNGQVVLLENVRFHAEEEANDAEFAKALASLADIYVNDAFGAAHRAHASTAGVTEYLSPCVAGYLLEKELQYLQAAIDNPQRPLAAIVGGSKVSSKIGVIETLLDKCDKLLIGGGMIFTFYKAQGLSVGGSLVEEDKLDLARSLMAKAQEKGVQLLLPVDVVVADKFAPDANAKTVAIDAIPDGWMGLDIGPESVKQFEEALADCRSVIWNGPMGVFEFDQFAVGTEAIARSLAGLTRKGATTIIGGGDSVAAVEKVGVASEMSHISTGGGASLELLEGKVLPGVAALDDAA</sequence>
<accession>Q31P73</accession>
<gene>
    <name evidence="1" type="primary">pgk</name>
    <name type="ordered locus">Synpcc7942_1116</name>
</gene>
<keyword id="KW-0067">ATP-binding</keyword>
<keyword id="KW-0963">Cytoplasm</keyword>
<keyword id="KW-0324">Glycolysis</keyword>
<keyword id="KW-0418">Kinase</keyword>
<keyword id="KW-0547">Nucleotide-binding</keyword>
<keyword id="KW-1185">Reference proteome</keyword>
<keyword id="KW-0808">Transferase</keyword>
<organism>
    <name type="scientific">Synechococcus elongatus (strain ATCC 33912 / PCC 7942 / FACHB-805)</name>
    <name type="common">Anacystis nidulans R2</name>
    <dbReference type="NCBI Taxonomy" id="1140"/>
    <lineage>
        <taxon>Bacteria</taxon>
        <taxon>Bacillati</taxon>
        <taxon>Cyanobacteriota</taxon>
        <taxon>Cyanophyceae</taxon>
        <taxon>Synechococcales</taxon>
        <taxon>Synechococcaceae</taxon>
        <taxon>Synechococcus</taxon>
    </lineage>
</organism>
<dbReference type="EC" id="2.7.2.3" evidence="1"/>
<dbReference type="EMBL" id="CP000100">
    <property type="protein sequence ID" value="ABB57146.1"/>
    <property type="molecule type" value="Genomic_DNA"/>
</dbReference>
<dbReference type="RefSeq" id="WP_011377868.1">
    <property type="nucleotide sequence ID" value="NZ_JACJTX010000003.1"/>
</dbReference>
<dbReference type="SMR" id="Q31P73"/>
<dbReference type="STRING" id="1140.Synpcc7942_1116"/>
<dbReference type="PaxDb" id="1140-Synpcc7942_1116"/>
<dbReference type="KEGG" id="syf:Synpcc7942_1116"/>
<dbReference type="eggNOG" id="COG0126">
    <property type="taxonomic scope" value="Bacteria"/>
</dbReference>
<dbReference type="HOGENOM" id="CLU_025427_0_2_3"/>
<dbReference type="OrthoDB" id="9808460at2"/>
<dbReference type="BioCyc" id="SYNEL:SYNPCC7942_1116-MONOMER"/>
<dbReference type="UniPathway" id="UPA00109">
    <property type="reaction ID" value="UER00185"/>
</dbReference>
<dbReference type="Proteomes" id="UP000889800">
    <property type="component" value="Chromosome"/>
</dbReference>
<dbReference type="GO" id="GO:0005829">
    <property type="term" value="C:cytosol"/>
    <property type="evidence" value="ECO:0007669"/>
    <property type="project" value="TreeGrafter"/>
</dbReference>
<dbReference type="GO" id="GO:0043531">
    <property type="term" value="F:ADP binding"/>
    <property type="evidence" value="ECO:0007669"/>
    <property type="project" value="TreeGrafter"/>
</dbReference>
<dbReference type="GO" id="GO:0005524">
    <property type="term" value="F:ATP binding"/>
    <property type="evidence" value="ECO:0007669"/>
    <property type="project" value="UniProtKB-KW"/>
</dbReference>
<dbReference type="GO" id="GO:0004618">
    <property type="term" value="F:phosphoglycerate kinase activity"/>
    <property type="evidence" value="ECO:0007669"/>
    <property type="project" value="UniProtKB-UniRule"/>
</dbReference>
<dbReference type="GO" id="GO:0006094">
    <property type="term" value="P:gluconeogenesis"/>
    <property type="evidence" value="ECO:0007669"/>
    <property type="project" value="TreeGrafter"/>
</dbReference>
<dbReference type="GO" id="GO:0006096">
    <property type="term" value="P:glycolytic process"/>
    <property type="evidence" value="ECO:0007669"/>
    <property type="project" value="UniProtKB-UniRule"/>
</dbReference>
<dbReference type="CDD" id="cd00318">
    <property type="entry name" value="Phosphoglycerate_kinase"/>
    <property type="match status" value="1"/>
</dbReference>
<dbReference type="FunFam" id="3.40.50.1260:FF:000003">
    <property type="entry name" value="Phosphoglycerate kinase"/>
    <property type="match status" value="1"/>
</dbReference>
<dbReference type="FunFam" id="3.40.50.1260:FF:000006">
    <property type="entry name" value="Phosphoglycerate kinase"/>
    <property type="match status" value="1"/>
</dbReference>
<dbReference type="FunFam" id="3.40.50.1260:FF:000017">
    <property type="entry name" value="Phosphoglycerate kinase"/>
    <property type="match status" value="1"/>
</dbReference>
<dbReference type="Gene3D" id="3.40.50.1260">
    <property type="entry name" value="Phosphoglycerate kinase, N-terminal domain"/>
    <property type="match status" value="2"/>
</dbReference>
<dbReference type="HAMAP" id="MF_00145">
    <property type="entry name" value="Phosphoglyc_kinase"/>
    <property type="match status" value="1"/>
</dbReference>
<dbReference type="InterPro" id="IPR001576">
    <property type="entry name" value="Phosphoglycerate_kinase"/>
</dbReference>
<dbReference type="InterPro" id="IPR015911">
    <property type="entry name" value="Phosphoglycerate_kinase_CS"/>
</dbReference>
<dbReference type="InterPro" id="IPR015824">
    <property type="entry name" value="Phosphoglycerate_kinase_N"/>
</dbReference>
<dbReference type="InterPro" id="IPR036043">
    <property type="entry name" value="Phosphoglycerate_kinase_sf"/>
</dbReference>
<dbReference type="PANTHER" id="PTHR11406">
    <property type="entry name" value="PHOSPHOGLYCERATE KINASE"/>
    <property type="match status" value="1"/>
</dbReference>
<dbReference type="PANTHER" id="PTHR11406:SF23">
    <property type="entry name" value="PHOSPHOGLYCERATE KINASE 1, CHLOROPLASTIC-RELATED"/>
    <property type="match status" value="1"/>
</dbReference>
<dbReference type="Pfam" id="PF00162">
    <property type="entry name" value="PGK"/>
    <property type="match status" value="1"/>
</dbReference>
<dbReference type="PIRSF" id="PIRSF000724">
    <property type="entry name" value="Pgk"/>
    <property type="match status" value="1"/>
</dbReference>
<dbReference type="PRINTS" id="PR00477">
    <property type="entry name" value="PHGLYCKINASE"/>
</dbReference>
<dbReference type="SUPFAM" id="SSF53748">
    <property type="entry name" value="Phosphoglycerate kinase"/>
    <property type="match status" value="1"/>
</dbReference>
<dbReference type="PROSITE" id="PS00111">
    <property type="entry name" value="PGLYCERATE_KINASE"/>
    <property type="match status" value="1"/>
</dbReference>
<proteinExistence type="inferred from homology"/>
<name>PGK_SYNE7</name>
<evidence type="ECO:0000255" key="1">
    <source>
        <dbReference type="HAMAP-Rule" id="MF_00145"/>
    </source>
</evidence>
<feature type="chain" id="PRO_1000058078" description="Phosphoglycerate kinase">
    <location>
        <begin position="1"/>
        <end position="402"/>
    </location>
</feature>
<feature type="binding site" evidence="1">
    <location>
        <begin position="24"/>
        <end position="26"/>
    </location>
    <ligand>
        <name>substrate</name>
    </ligand>
</feature>
<feature type="binding site" evidence="1">
    <location>
        <position position="40"/>
    </location>
    <ligand>
        <name>substrate</name>
    </ligand>
</feature>
<feature type="binding site" evidence="1">
    <location>
        <begin position="63"/>
        <end position="66"/>
    </location>
    <ligand>
        <name>substrate</name>
    </ligand>
</feature>
<feature type="binding site" evidence="1">
    <location>
        <position position="122"/>
    </location>
    <ligand>
        <name>substrate</name>
    </ligand>
</feature>
<feature type="binding site" evidence="1">
    <location>
        <position position="155"/>
    </location>
    <ligand>
        <name>substrate</name>
    </ligand>
</feature>
<feature type="binding site" evidence="1">
    <location>
        <position position="206"/>
    </location>
    <ligand>
        <name>ATP</name>
        <dbReference type="ChEBI" id="CHEBI:30616"/>
    </ligand>
</feature>
<feature type="binding site" evidence="1">
    <location>
        <position position="297"/>
    </location>
    <ligand>
        <name>ATP</name>
        <dbReference type="ChEBI" id="CHEBI:30616"/>
    </ligand>
</feature>
<feature type="binding site" evidence="1">
    <location>
        <position position="328"/>
    </location>
    <ligand>
        <name>ATP</name>
        <dbReference type="ChEBI" id="CHEBI:30616"/>
    </ligand>
</feature>
<feature type="binding site" evidence="1">
    <location>
        <begin position="357"/>
        <end position="360"/>
    </location>
    <ligand>
        <name>ATP</name>
        <dbReference type="ChEBI" id="CHEBI:30616"/>
    </ligand>
</feature>
<protein>
    <recommendedName>
        <fullName evidence="1">Phosphoglycerate kinase</fullName>
        <ecNumber evidence="1">2.7.2.3</ecNumber>
    </recommendedName>
</protein>
<reference key="1">
    <citation type="submission" date="2005-08" db="EMBL/GenBank/DDBJ databases">
        <title>Complete sequence of chromosome 1 of Synechococcus elongatus PCC 7942.</title>
        <authorList>
            <consortium name="US DOE Joint Genome Institute"/>
            <person name="Copeland A."/>
            <person name="Lucas S."/>
            <person name="Lapidus A."/>
            <person name="Barry K."/>
            <person name="Detter J.C."/>
            <person name="Glavina T."/>
            <person name="Hammon N."/>
            <person name="Israni S."/>
            <person name="Pitluck S."/>
            <person name="Schmutz J."/>
            <person name="Larimer F."/>
            <person name="Land M."/>
            <person name="Kyrpides N."/>
            <person name="Lykidis A."/>
            <person name="Golden S."/>
            <person name="Richardson P."/>
        </authorList>
    </citation>
    <scope>NUCLEOTIDE SEQUENCE [LARGE SCALE GENOMIC DNA]</scope>
    <source>
        <strain>ATCC 33912 / PCC 7942 / FACHB-805</strain>
    </source>
</reference>
<comment type="catalytic activity">
    <reaction evidence="1">
        <text>(2R)-3-phosphoglycerate + ATP = (2R)-3-phospho-glyceroyl phosphate + ADP</text>
        <dbReference type="Rhea" id="RHEA:14801"/>
        <dbReference type="ChEBI" id="CHEBI:30616"/>
        <dbReference type="ChEBI" id="CHEBI:57604"/>
        <dbReference type="ChEBI" id="CHEBI:58272"/>
        <dbReference type="ChEBI" id="CHEBI:456216"/>
        <dbReference type="EC" id="2.7.2.3"/>
    </reaction>
</comment>
<comment type="pathway">
    <text evidence="1">Carbohydrate degradation; glycolysis; pyruvate from D-glyceraldehyde 3-phosphate: step 2/5.</text>
</comment>
<comment type="subunit">
    <text evidence="1">Monomer.</text>
</comment>
<comment type="subcellular location">
    <subcellularLocation>
        <location evidence="1">Cytoplasm</location>
    </subcellularLocation>
</comment>
<comment type="similarity">
    <text evidence="1">Belongs to the phosphoglycerate kinase family.</text>
</comment>